<sequence>MAVHLLIVDALNLIRRIHAVQGSPCVETCQHALDQLIMHSQPTHAVAVFDDENRSSGWRHQRLPDYKAGRPPMPEELHNEMPALRAAFEQRGVPCWSASGNEADDLAATLAVKVTQAGHQATIVSTDKGYCQLLSPTLRIRDYFQKRWLDAPFIDKEFGVQPQQLPDYWGLAGISSSKVPGVAGIGPKSATQLLVEFQSLEGIYENLDAVAEKWRKKLETHKEMAFLCRDIARLQTDLHIDGNLQQLRLVR</sequence>
<gene>
    <name evidence="1" type="primary">xni</name>
    <name evidence="1" type="synonym">ygdG</name>
    <name type="ordered locus">Ecok1_27310</name>
    <name type="ORF">APECO1_3733</name>
</gene>
<name>XNI_ECOK1</name>
<proteinExistence type="inferred from homology"/>
<accession>A1AEY5</accession>
<reference key="1">
    <citation type="journal article" date="2007" name="J. Bacteriol.">
        <title>The genome sequence of avian pathogenic Escherichia coli strain O1:K1:H7 shares strong similarities with human extraintestinal pathogenic E. coli genomes.</title>
        <authorList>
            <person name="Johnson T.J."/>
            <person name="Kariyawasam S."/>
            <person name="Wannemuehler Y."/>
            <person name="Mangiamele P."/>
            <person name="Johnson S.J."/>
            <person name="Doetkott C."/>
            <person name="Skyberg J.A."/>
            <person name="Lynne A.M."/>
            <person name="Johnson J.R."/>
            <person name="Nolan L.K."/>
        </authorList>
    </citation>
    <scope>NUCLEOTIDE SEQUENCE [LARGE SCALE GENOMIC DNA]</scope>
</reference>
<comment type="function">
    <text evidence="1">Has flap endonuclease activity. During DNA replication, flap endonucleases cleave the 5'-overhanging flap structure that is generated by displacement synthesis when DNA polymerase encounters the 5'-end of a downstream Okazaki fragment.</text>
</comment>
<comment type="cofactor">
    <cofactor evidence="1">
        <name>Mg(2+)</name>
        <dbReference type="ChEBI" id="CHEBI:18420"/>
    </cofactor>
    <text evidence="1">Binds 2 Mg(2+) per subunit. Only one magnesium ion has a direct interaction with the protein, the other interactions are indirect.</text>
</comment>
<comment type="cofactor">
    <cofactor evidence="1">
        <name>K(+)</name>
        <dbReference type="ChEBI" id="CHEBI:29103"/>
    </cofactor>
    <text evidence="1">Binds 1 K(+) per subunit. The potassium ion strongly increases the affinity for DNA.</text>
</comment>
<comment type="similarity">
    <text evidence="1">Belongs to the Xni family.</text>
</comment>
<comment type="sequence caution" evidence="2">
    <conflict type="erroneous initiation">
        <sequence resource="EMBL-CDS" id="ABJ02225"/>
    </conflict>
    <text>Truncated N-terminus.</text>
</comment>
<organism>
    <name type="scientific">Escherichia coli O1:K1 / APEC</name>
    <dbReference type="NCBI Taxonomy" id="405955"/>
    <lineage>
        <taxon>Bacteria</taxon>
        <taxon>Pseudomonadati</taxon>
        <taxon>Pseudomonadota</taxon>
        <taxon>Gammaproteobacteria</taxon>
        <taxon>Enterobacterales</taxon>
        <taxon>Enterobacteriaceae</taxon>
        <taxon>Escherichia</taxon>
    </lineage>
</organism>
<protein>
    <recommendedName>
        <fullName evidence="1">Flap endonuclease Xni</fullName>
        <shortName evidence="1">FEN</shortName>
        <ecNumber evidence="1">3.1.-.-</ecNumber>
    </recommendedName>
</protein>
<feature type="chain" id="PRO_0000297862" description="Flap endonuclease Xni">
    <location>
        <begin position="1"/>
        <end position="251"/>
    </location>
</feature>
<feature type="domain" description="5'-3' exonuclease" evidence="1">
    <location>
        <begin position="160"/>
        <end position="249"/>
    </location>
</feature>
<feature type="region of interest" description="Interaction with DNA" evidence="1">
    <location>
        <begin position="184"/>
        <end position="189"/>
    </location>
</feature>
<feature type="binding site" evidence="1">
    <location>
        <position position="104"/>
    </location>
    <ligand>
        <name>Mg(2+)</name>
        <dbReference type="ChEBI" id="CHEBI:18420"/>
    </ligand>
</feature>
<feature type="binding site" evidence="1">
    <location>
        <position position="171"/>
    </location>
    <ligand>
        <name>K(+)</name>
        <dbReference type="ChEBI" id="CHEBI:29103"/>
    </ligand>
</feature>
<feature type="binding site" evidence="1">
    <location>
        <position position="172"/>
    </location>
    <ligand>
        <name>K(+)</name>
        <dbReference type="ChEBI" id="CHEBI:29103"/>
    </ligand>
</feature>
<feature type="binding site" evidence="1">
    <location>
        <position position="180"/>
    </location>
    <ligand>
        <name>K(+)</name>
        <dbReference type="ChEBI" id="CHEBI:29103"/>
    </ligand>
</feature>
<feature type="binding site" evidence="1">
    <location>
        <position position="182"/>
    </location>
    <ligand>
        <name>K(+)</name>
        <dbReference type="ChEBI" id="CHEBI:29103"/>
    </ligand>
</feature>
<feature type="binding site" evidence="1">
    <location>
        <position position="185"/>
    </location>
    <ligand>
        <name>K(+)</name>
        <dbReference type="ChEBI" id="CHEBI:29103"/>
    </ligand>
</feature>
<dbReference type="EC" id="3.1.-.-" evidence="1"/>
<dbReference type="EMBL" id="CP000468">
    <property type="protein sequence ID" value="ABJ02225.1"/>
    <property type="status" value="ALT_INIT"/>
    <property type="molecule type" value="Genomic_DNA"/>
</dbReference>
<dbReference type="RefSeq" id="WP_001296330.1">
    <property type="nucleotide sequence ID" value="NZ_CADILS010000024.1"/>
</dbReference>
<dbReference type="SMR" id="A1AEY5"/>
<dbReference type="KEGG" id="ecv:APECO1_3733"/>
<dbReference type="HOGENOM" id="CLU_004675_1_2_6"/>
<dbReference type="Proteomes" id="UP000008216">
    <property type="component" value="Chromosome"/>
</dbReference>
<dbReference type="GO" id="GO:0008409">
    <property type="term" value="F:5'-3' exonuclease activity"/>
    <property type="evidence" value="ECO:0007669"/>
    <property type="project" value="InterPro"/>
</dbReference>
<dbReference type="GO" id="GO:0017108">
    <property type="term" value="F:5'-flap endonuclease activity"/>
    <property type="evidence" value="ECO:0007669"/>
    <property type="project" value="UniProtKB-UniRule"/>
</dbReference>
<dbReference type="GO" id="GO:0003677">
    <property type="term" value="F:DNA binding"/>
    <property type="evidence" value="ECO:0007669"/>
    <property type="project" value="UniProtKB-UniRule"/>
</dbReference>
<dbReference type="GO" id="GO:0000287">
    <property type="term" value="F:magnesium ion binding"/>
    <property type="evidence" value="ECO:0007669"/>
    <property type="project" value="UniProtKB-UniRule"/>
</dbReference>
<dbReference type="GO" id="GO:0030955">
    <property type="term" value="F:potassium ion binding"/>
    <property type="evidence" value="ECO:0007669"/>
    <property type="project" value="UniProtKB-UniRule"/>
</dbReference>
<dbReference type="GO" id="GO:0033567">
    <property type="term" value="P:DNA replication, Okazaki fragment processing"/>
    <property type="evidence" value="ECO:0007669"/>
    <property type="project" value="UniProtKB-UniRule"/>
</dbReference>
<dbReference type="CDD" id="cd09898">
    <property type="entry name" value="H3TH_53EXO"/>
    <property type="match status" value="1"/>
</dbReference>
<dbReference type="CDD" id="cd09859">
    <property type="entry name" value="PIN_53EXO"/>
    <property type="match status" value="1"/>
</dbReference>
<dbReference type="FunFam" id="1.10.150.20:FF:000003">
    <property type="entry name" value="DNA polymerase I"/>
    <property type="match status" value="1"/>
</dbReference>
<dbReference type="FunFam" id="3.40.50.1010:FF:000011">
    <property type="entry name" value="Flap endonuclease Xni"/>
    <property type="match status" value="1"/>
</dbReference>
<dbReference type="Gene3D" id="1.10.150.20">
    <property type="entry name" value="5' to 3' exonuclease, C-terminal subdomain"/>
    <property type="match status" value="1"/>
</dbReference>
<dbReference type="Gene3D" id="3.40.50.1010">
    <property type="entry name" value="5'-nuclease"/>
    <property type="match status" value="1"/>
</dbReference>
<dbReference type="HAMAP" id="MF_01192">
    <property type="entry name" value="Xni"/>
    <property type="match status" value="1"/>
</dbReference>
<dbReference type="InterPro" id="IPR020046">
    <property type="entry name" value="5-3_exonucl_a-hlix_arch_N"/>
</dbReference>
<dbReference type="InterPro" id="IPR002421">
    <property type="entry name" value="5-3_exonuclease"/>
</dbReference>
<dbReference type="InterPro" id="IPR036279">
    <property type="entry name" value="5-3_exonuclease_C_sf"/>
</dbReference>
<dbReference type="InterPro" id="IPR020045">
    <property type="entry name" value="DNA_polI_H3TH"/>
</dbReference>
<dbReference type="InterPro" id="IPR038969">
    <property type="entry name" value="FEN"/>
</dbReference>
<dbReference type="InterPro" id="IPR008918">
    <property type="entry name" value="HhH2"/>
</dbReference>
<dbReference type="InterPro" id="IPR029060">
    <property type="entry name" value="PIN-like_dom_sf"/>
</dbReference>
<dbReference type="InterPro" id="IPR022895">
    <property type="entry name" value="Xni"/>
</dbReference>
<dbReference type="NCBIfam" id="NF007017">
    <property type="entry name" value="PRK09482.1"/>
    <property type="match status" value="1"/>
</dbReference>
<dbReference type="PANTHER" id="PTHR42646:SF2">
    <property type="entry name" value="5'-3' EXONUCLEASE FAMILY PROTEIN"/>
    <property type="match status" value="1"/>
</dbReference>
<dbReference type="PANTHER" id="PTHR42646">
    <property type="entry name" value="FLAP ENDONUCLEASE XNI"/>
    <property type="match status" value="1"/>
</dbReference>
<dbReference type="Pfam" id="PF01367">
    <property type="entry name" value="5_3_exonuc"/>
    <property type="match status" value="1"/>
</dbReference>
<dbReference type="Pfam" id="PF02739">
    <property type="entry name" value="5_3_exonuc_N"/>
    <property type="match status" value="1"/>
</dbReference>
<dbReference type="SMART" id="SM00475">
    <property type="entry name" value="53EXOc"/>
    <property type="match status" value="1"/>
</dbReference>
<dbReference type="SMART" id="SM00279">
    <property type="entry name" value="HhH2"/>
    <property type="match status" value="1"/>
</dbReference>
<dbReference type="SUPFAM" id="SSF47807">
    <property type="entry name" value="5' to 3' exonuclease, C-terminal subdomain"/>
    <property type="match status" value="1"/>
</dbReference>
<dbReference type="SUPFAM" id="SSF88723">
    <property type="entry name" value="PIN domain-like"/>
    <property type="match status" value="1"/>
</dbReference>
<evidence type="ECO:0000255" key="1">
    <source>
        <dbReference type="HAMAP-Rule" id="MF_01192"/>
    </source>
</evidence>
<evidence type="ECO:0000305" key="2"/>
<keyword id="KW-0238">DNA-binding</keyword>
<keyword id="KW-0255">Endonuclease</keyword>
<keyword id="KW-0378">Hydrolase</keyword>
<keyword id="KW-0460">Magnesium</keyword>
<keyword id="KW-0479">Metal-binding</keyword>
<keyword id="KW-0540">Nuclease</keyword>
<keyword id="KW-0630">Potassium</keyword>
<keyword id="KW-1185">Reference proteome</keyword>